<gene>
    <name evidence="1" type="primary">psbF</name>
</gene>
<organism>
    <name type="scientific">Cuscuta pentagona</name>
    <name type="common">Five-angled dodder</name>
    <dbReference type="NCBI Taxonomy" id="112407"/>
    <lineage>
        <taxon>Eukaryota</taxon>
        <taxon>Viridiplantae</taxon>
        <taxon>Streptophyta</taxon>
        <taxon>Embryophyta</taxon>
        <taxon>Tracheophyta</taxon>
        <taxon>Spermatophyta</taxon>
        <taxon>Magnoliopsida</taxon>
        <taxon>eudicotyledons</taxon>
        <taxon>Gunneridae</taxon>
        <taxon>Pentapetalae</taxon>
        <taxon>asterids</taxon>
        <taxon>lamiids</taxon>
        <taxon>Solanales</taxon>
        <taxon>Convolvulaceae</taxon>
        <taxon>Cuscuteae</taxon>
        <taxon>Cuscuta</taxon>
        <taxon>Cuscuta subgen. Grammica</taxon>
        <taxon>Cuscuta sect. Cleistogrammica</taxon>
    </lineage>
</organism>
<proteinExistence type="inferred from homology"/>
<accession>Q7H825</accession>
<keyword id="KW-0249">Electron transport</keyword>
<keyword id="KW-0349">Heme</keyword>
<keyword id="KW-0408">Iron</keyword>
<keyword id="KW-0472">Membrane</keyword>
<keyword id="KW-0479">Metal-binding</keyword>
<keyword id="KW-0602">Photosynthesis</keyword>
<keyword id="KW-0604">Photosystem II</keyword>
<keyword id="KW-0934">Plastid</keyword>
<keyword id="KW-0812">Transmembrane</keyword>
<keyword id="KW-1133">Transmembrane helix</keyword>
<keyword id="KW-0813">Transport</keyword>
<reference key="1">
    <citation type="journal article" date="2002" name="Am. J. Bot.">
        <title>Monophyly of the Convolvulaceae and circumscription of their major lineages based on DNA sequences of multiple chloroplast loci.</title>
        <authorList>
            <person name="Stefanovic S."/>
            <person name="Krueger L."/>
            <person name="Olmstead R.G."/>
        </authorList>
        <dbReference type="AGRICOLA" id="IND23320510"/>
    </citation>
    <scope>NUCLEOTIDE SEQUENCE [GENOMIC DNA]</scope>
</reference>
<dbReference type="EMBL" id="AY100952">
    <property type="protein sequence ID" value="AAM53419.1"/>
    <property type="molecule type" value="Genomic_DNA"/>
</dbReference>
<dbReference type="SMR" id="Q7H825"/>
<dbReference type="GO" id="GO:0009539">
    <property type="term" value="C:photosystem II reaction center"/>
    <property type="evidence" value="ECO:0007669"/>
    <property type="project" value="InterPro"/>
</dbReference>
<dbReference type="GO" id="GO:0042170">
    <property type="term" value="C:plastid membrane"/>
    <property type="evidence" value="ECO:0007669"/>
    <property type="project" value="UniProtKB-SubCell"/>
</dbReference>
<dbReference type="GO" id="GO:0042651">
    <property type="term" value="C:thylakoid membrane"/>
    <property type="evidence" value="ECO:0007669"/>
    <property type="project" value="UniProtKB-UniRule"/>
</dbReference>
<dbReference type="GO" id="GO:0009055">
    <property type="term" value="F:electron transfer activity"/>
    <property type="evidence" value="ECO:0007669"/>
    <property type="project" value="UniProtKB-UniRule"/>
</dbReference>
<dbReference type="GO" id="GO:0020037">
    <property type="term" value="F:heme binding"/>
    <property type="evidence" value="ECO:0007669"/>
    <property type="project" value="InterPro"/>
</dbReference>
<dbReference type="GO" id="GO:0005506">
    <property type="term" value="F:iron ion binding"/>
    <property type="evidence" value="ECO:0007669"/>
    <property type="project" value="UniProtKB-UniRule"/>
</dbReference>
<dbReference type="GO" id="GO:0009767">
    <property type="term" value="P:photosynthetic electron transport chain"/>
    <property type="evidence" value="ECO:0007669"/>
    <property type="project" value="InterPro"/>
</dbReference>
<dbReference type="HAMAP" id="MF_00643">
    <property type="entry name" value="PSII_PsbF"/>
    <property type="match status" value="1"/>
</dbReference>
<dbReference type="InterPro" id="IPR006241">
    <property type="entry name" value="PSII_cyt_b559_bsu"/>
</dbReference>
<dbReference type="InterPro" id="IPR006216">
    <property type="entry name" value="PSII_cyt_b559_CS"/>
</dbReference>
<dbReference type="InterPro" id="IPR013081">
    <property type="entry name" value="PSII_cyt_b559_N"/>
</dbReference>
<dbReference type="NCBIfam" id="TIGR01333">
    <property type="entry name" value="cyt_b559_beta"/>
    <property type="match status" value="1"/>
</dbReference>
<dbReference type="Pfam" id="PF00283">
    <property type="entry name" value="Cytochrom_B559"/>
    <property type="match status" value="1"/>
</dbReference>
<dbReference type="PIRSF" id="PIRSF000037">
    <property type="entry name" value="PsbF"/>
    <property type="match status" value="1"/>
</dbReference>
<dbReference type="SUPFAM" id="SSF161045">
    <property type="entry name" value="Cytochrome b559 subunits"/>
    <property type="match status" value="1"/>
</dbReference>
<dbReference type="PROSITE" id="PS00537">
    <property type="entry name" value="CYTOCHROME_B559"/>
    <property type="match status" value="1"/>
</dbReference>
<comment type="function">
    <text evidence="1">This b-type cytochrome is tightly associated with the reaction center of photosystem II (PSII). PSII is a light-driven water:plastoquinone oxidoreductase that uses light energy to abstract electrons from H(2)O, generating O(2) and a proton gradient subsequently used for ATP formation. It consists of a core antenna complex that captures photons, and an electron transfer chain that converts photonic excitation into a charge separation.</text>
</comment>
<comment type="cofactor">
    <cofactor evidence="1">
        <name>heme b</name>
        <dbReference type="ChEBI" id="CHEBI:60344"/>
    </cofactor>
    <text evidence="1">With its partner (PsbE) binds heme. PSII binds additional chlorophylls, carotenoids and specific lipids.</text>
</comment>
<comment type="subunit">
    <text evidence="1">Heterodimer of an alpha subunit and a beta subunit. PSII is composed of 1 copy each of membrane proteins PsbA, PsbB, PsbC, PsbD, PsbE, PsbF, PsbH, PsbI, PsbJ, PsbK, PsbL, PsbM, PsbT, PsbX, PsbY, PsbZ, Psb30/Ycf12, at least 3 peripheral proteins of the oxygen-evolving complex and a large number of cofactors. It forms dimeric complexes.</text>
</comment>
<comment type="subcellular location">
    <subcellularLocation>
        <location evidence="2">Plastid membrane</location>
        <topology evidence="1">Single-pass membrane protein</topology>
    </subcellularLocation>
</comment>
<comment type="similarity">
    <text evidence="1">Belongs to the PsbE/PsbF family.</text>
</comment>
<comment type="caution">
    <text evidence="2">Young tissue from this organism is photosynthetic and contains some thylakoids, although the photosynthetic activity does not exceed the light compensation point.</text>
</comment>
<sequence>MTIDRTYPIFTVRWLAVHGLAIPTVFFLGSISAMQFIQR</sequence>
<evidence type="ECO:0000255" key="1">
    <source>
        <dbReference type="HAMAP-Rule" id="MF_00643"/>
    </source>
</evidence>
<evidence type="ECO:0000305" key="2"/>
<feature type="chain" id="PRO_0000200382" description="Cytochrome b559 subunit beta">
    <location>
        <begin position="1"/>
        <end position="39"/>
    </location>
</feature>
<feature type="transmembrane region" description="Helical" evidence="1">
    <location>
        <begin position="14"/>
        <end position="30"/>
    </location>
</feature>
<feature type="binding site" description="axial binding residue" evidence="1">
    <location>
        <position position="18"/>
    </location>
    <ligand>
        <name>heme</name>
        <dbReference type="ChEBI" id="CHEBI:30413"/>
        <note>ligand shared with alpha subunit</note>
    </ligand>
    <ligandPart>
        <name>Fe</name>
        <dbReference type="ChEBI" id="CHEBI:18248"/>
    </ligandPart>
</feature>
<protein>
    <recommendedName>
        <fullName evidence="1">Cytochrome b559 subunit beta</fullName>
    </recommendedName>
    <alternativeName>
        <fullName evidence="1">PSII reaction center subunit VI</fullName>
    </alternativeName>
</protein>
<geneLocation type="plastid"/>
<name>PSBF_CUSPE</name>